<protein>
    <recommendedName>
        <fullName evidence="1">Small ribosomal subunit protein eS1</fullName>
    </recommendedName>
    <alternativeName>
        <fullName evidence="2">40S ribosomal protein S3a</fullName>
    </alternativeName>
</protein>
<feature type="initiator methionine" description="Removed" evidence="1">
    <location>
        <position position="1"/>
    </location>
</feature>
<feature type="chain" id="PRO_0000389422" description="Small ribosomal subunit protein eS1">
    <location>
        <begin position="2"/>
        <end position="259"/>
    </location>
</feature>
<proteinExistence type="inferred from homology"/>
<accession>A9USH8</accession>
<dbReference type="EMBL" id="CH991544">
    <property type="protein sequence ID" value="EDQ91784.1"/>
    <property type="molecule type" value="Genomic_DNA"/>
</dbReference>
<dbReference type="RefSeq" id="XP_001743070.1">
    <property type="nucleotide sequence ID" value="XM_001743018.1"/>
</dbReference>
<dbReference type="SMR" id="A9USH8"/>
<dbReference type="FunCoup" id="A9USH8">
    <property type="interactions" value="1143"/>
</dbReference>
<dbReference type="STRING" id="81824.A9USH8"/>
<dbReference type="EnsemblProtists" id="EDQ91784">
    <property type="protein sequence ID" value="EDQ91784"/>
    <property type="gene ID" value="MONBRDRAFT_34920"/>
</dbReference>
<dbReference type="KEGG" id="mbr:MONBRDRAFT_34920"/>
<dbReference type="eggNOG" id="KOG1628">
    <property type="taxonomic scope" value="Eukaryota"/>
</dbReference>
<dbReference type="InParanoid" id="A9USH8"/>
<dbReference type="OMA" id="TRFKGHE"/>
<dbReference type="Proteomes" id="UP000001357">
    <property type="component" value="Unassembled WGS sequence"/>
</dbReference>
<dbReference type="GO" id="GO:0005829">
    <property type="term" value="C:cytosol"/>
    <property type="evidence" value="ECO:0000318"/>
    <property type="project" value="GO_Central"/>
</dbReference>
<dbReference type="GO" id="GO:0022627">
    <property type="term" value="C:cytosolic small ribosomal subunit"/>
    <property type="evidence" value="ECO:0007669"/>
    <property type="project" value="UniProtKB-UniRule"/>
</dbReference>
<dbReference type="GO" id="GO:0003735">
    <property type="term" value="F:structural constituent of ribosome"/>
    <property type="evidence" value="ECO:0007669"/>
    <property type="project" value="UniProtKB-UniRule"/>
</dbReference>
<dbReference type="GO" id="GO:0006412">
    <property type="term" value="P:translation"/>
    <property type="evidence" value="ECO:0007669"/>
    <property type="project" value="UniProtKB-UniRule"/>
</dbReference>
<dbReference type="HAMAP" id="MF_03122">
    <property type="entry name" value="Ribosomal_eS1_euk"/>
    <property type="match status" value="1"/>
</dbReference>
<dbReference type="InterPro" id="IPR001593">
    <property type="entry name" value="Ribosomal_eS1"/>
</dbReference>
<dbReference type="InterPro" id="IPR018281">
    <property type="entry name" value="Ribosomal_eS1_CS"/>
</dbReference>
<dbReference type="InterPro" id="IPR027500">
    <property type="entry name" value="Ribosomal_eS1_euk"/>
</dbReference>
<dbReference type="PANTHER" id="PTHR11830">
    <property type="entry name" value="40S RIBOSOMAL PROTEIN S3A"/>
    <property type="match status" value="1"/>
</dbReference>
<dbReference type="Pfam" id="PF01015">
    <property type="entry name" value="Ribosomal_S3Ae"/>
    <property type="match status" value="1"/>
</dbReference>
<dbReference type="SMART" id="SM01397">
    <property type="entry name" value="Ribosomal_S3Ae"/>
    <property type="match status" value="1"/>
</dbReference>
<dbReference type="PROSITE" id="PS01191">
    <property type="entry name" value="RIBOSOMAL_S3AE"/>
    <property type="match status" value="1"/>
</dbReference>
<comment type="subunit">
    <text evidence="1">Component of the small ribosomal subunit. Mature ribosomes consist of a small (40S) and a large (60S) subunit. The 40S subunit contains about 33 different proteins and 1 molecule of RNA (18S). The 60S subunit contains about 49 different proteins and 3 molecules of RNA (25S, 5.8S and 5S).</text>
</comment>
<comment type="subcellular location">
    <subcellularLocation>
        <location evidence="1">Cytoplasm</location>
    </subcellularLocation>
</comment>
<comment type="similarity">
    <text evidence="1">Belongs to the eukaryotic ribosomal protein eS1 family.</text>
</comment>
<evidence type="ECO:0000255" key="1">
    <source>
        <dbReference type="HAMAP-Rule" id="MF_03122"/>
    </source>
</evidence>
<evidence type="ECO:0000305" key="2"/>
<organism>
    <name type="scientific">Monosiga brevicollis</name>
    <name type="common">Choanoflagellate</name>
    <dbReference type="NCBI Taxonomy" id="81824"/>
    <lineage>
        <taxon>Eukaryota</taxon>
        <taxon>Choanoflagellata</taxon>
        <taxon>Craspedida</taxon>
        <taxon>Salpingoecidae</taxon>
        <taxon>Monosiga</taxon>
    </lineage>
</organism>
<keyword id="KW-0963">Cytoplasm</keyword>
<keyword id="KW-1185">Reference proteome</keyword>
<keyword id="KW-0687">Ribonucleoprotein</keyword>
<keyword id="KW-0689">Ribosomal protein</keyword>
<gene>
    <name type="ORF">34920</name>
</gene>
<name>RS3A_MONBE</name>
<sequence>MAVGKNKKLMKGKKGGKKKVVDVFTKKEWYDVKAPSYFKKRQVGKTPVNRTAGTKLSADGLRGRVYEMSLADLNDDESTFRKVKLQVEEIQGTECLTNFHGMSLTTDKLRSLVKKWRSLIEAFVDVKTNDGYVLRIFSIGFTKKQANSDRKTCYAQSAQKRALRAKMVEIMQREATCDLKEFVSKLMPGTIGQEIQKKCQSIFPLQDVYIRKVKVLKKPRFDVSKLLELHGEAGGVTADKGKTVAKSGEFVEPKPQTSV</sequence>
<reference key="1">
    <citation type="journal article" date="2008" name="Nature">
        <title>The genome of the choanoflagellate Monosiga brevicollis and the origin of metazoans.</title>
        <authorList>
            <consortium name="JGI Sequencing"/>
            <person name="King N."/>
            <person name="Westbrook M.J."/>
            <person name="Young S.L."/>
            <person name="Kuo A."/>
            <person name="Abedin M."/>
            <person name="Chapman J."/>
            <person name="Fairclough S."/>
            <person name="Hellsten U."/>
            <person name="Isogai Y."/>
            <person name="Letunic I."/>
            <person name="Marr M."/>
            <person name="Pincus D."/>
            <person name="Putnam N."/>
            <person name="Rokas A."/>
            <person name="Wright K.J."/>
            <person name="Zuzow R."/>
            <person name="Dirks W."/>
            <person name="Good M."/>
            <person name="Goodstein D."/>
            <person name="Lemons D."/>
            <person name="Li W."/>
            <person name="Lyons J.B."/>
            <person name="Morris A."/>
            <person name="Nichols S."/>
            <person name="Richter D.J."/>
            <person name="Salamov A."/>
            <person name="Bork P."/>
            <person name="Lim W.A."/>
            <person name="Manning G."/>
            <person name="Miller W.T."/>
            <person name="McGinnis W."/>
            <person name="Shapiro H."/>
            <person name="Tjian R."/>
            <person name="Grigoriev I.V."/>
            <person name="Rokhsar D."/>
        </authorList>
    </citation>
    <scope>NUCLEOTIDE SEQUENCE [LARGE SCALE GENOMIC DNA]</scope>
    <source>
        <strain>MX1 / ATCC 50154</strain>
    </source>
</reference>